<organism>
    <name type="scientific">Mus musculus</name>
    <name type="common">Mouse</name>
    <dbReference type="NCBI Taxonomy" id="10090"/>
    <lineage>
        <taxon>Eukaryota</taxon>
        <taxon>Metazoa</taxon>
        <taxon>Chordata</taxon>
        <taxon>Craniata</taxon>
        <taxon>Vertebrata</taxon>
        <taxon>Euteleostomi</taxon>
        <taxon>Mammalia</taxon>
        <taxon>Eutheria</taxon>
        <taxon>Euarchontoglires</taxon>
        <taxon>Glires</taxon>
        <taxon>Rodentia</taxon>
        <taxon>Myomorpha</taxon>
        <taxon>Muroidea</taxon>
        <taxon>Muridae</taxon>
        <taxon>Murinae</taxon>
        <taxon>Mus</taxon>
        <taxon>Mus</taxon>
    </lineage>
</organism>
<proteinExistence type="evidence at protein level"/>
<comment type="function">
    <text evidence="1 9">Cellular adhesion molecule that may play an important role in cell-cell interactions at interendothelial junctions (PubMed:9651350). Acts as a regulator of cell migration, probably via increasing cell-cell adhesion (By similarity). Promotes homotypic calcium-dependent aggregation and adhesion and clusters at intercellular junctions (PubMed:9651350). Unable to bind to catenins, weakly associates with the cytoskeleton (PubMed:9651350).</text>
</comment>
<comment type="subcellular location">
    <molecule>Protocadherin-12</molecule>
    <subcellularLocation>
        <location evidence="1">Cell membrane</location>
        <topology evidence="2">Single-pass type I membrane protein</topology>
    </subcellularLocation>
    <subcellularLocation>
        <location evidence="9">Cell junction</location>
    </subcellularLocation>
</comment>
<comment type="subcellular location">
    <molecule>Protocadherin-12, secreted form</molecule>
    <subcellularLocation>
        <location evidence="1">Secreted</location>
    </subcellularLocation>
    <text evidence="1">The secreted form is produced following cleavage by ADAM10.</text>
</comment>
<comment type="tissue specificity">
    <text evidence="5 6 9">Expressed in endothelial cells: localizes in vasculogenic rather than angiogenic endothelium (PubMed:15541725, PubMed:9651350). Strongly expressed in a subset of invasive cells of the placenta, named glycogen-rich trophoblasts cells (at protein level) (PubMed:15541725). glycogen-rich trophoblasts cells originate from the from the ectoplacental cone where they rapidly form tight islets (at protein level) (PubMed:16269175). In adult mice, present at high level in mesangial cells of kidney glomeruli, while expression was not detected in other types of perivascular cells (PubMed:15541725).</text>
</comment>
<comment type="PTM">
    <text evidence="5">N-glycosylated.</text>
</comment>
<comment type="PTM">
    <molecule>Protocadherin-12</molecule>
    <text evidence="1">Cleaved by ADAM10 close to the transmembrane domain to release the Protocadherin-12, secreted form in the serum. Cleavage results in reduced cellular adhesion in a cell migration assay.</text>
</comment>
<comment type="disruption phenotype">
    <text evidence="5 7 8">Mice are viable and fertile (PubMed:15541725, PubMed:18477666). Mice however show alterations in placental development that result in embryonic growth retardation: placentas are smaller and show limited angiogenesis and mis-segregation of the labyrinthine and intermediate layers (PubMed:18477666). Mice also display modifications in the structure and function of arteries, such as rearrangement of the arterial wall elastic fibers (PubMed:22205043).</text>
</comment>
<feature type="signal peptide" evidence="2">
    <location>
        <begin position="1"/>
        <end position="17"/>
    </location>
</feature>
<feature type="chain" id="PRO_0000003997" description="Protocadherin-12">
    <location>
        <begin position="18"/>
        <end position="1180"/>
    </location>
</feature>
<feature type="chain" id="PRO_0000444042" description="Protocadherin-12, secreted form" evidence="1">
    <location>
        <begin position="18"/>
        <end status="unknown"/>
    </location>
</feature>
<feature type="topological domain" description="Extracellular" evidence="2">
    <location>
        <begin position="18"/>
        <end position="716"/>
    </location>
</feature>
<feature type="transmembrane region" description="Helical" evidence="2">
    <location>
        <begin position="717"/>
        <end position="737"/>
    </location>
</feature>
<feature type="topological domain" description="Cytoplasmic" evidence="2">
    <location>
        <begin position="738"/>
        <end position="1180"/>
    </location>
</feature>
<feature type="domain" description="Cadherin 1" evidence="3">
    <location>
        <begin position="28"/>
        <end position="135"/>
    </location>
</feature>
<feature type="domain" description="Cadherin 2" evidence="3">
    <location>
        <begin position="136"/>
        <end position="244"/>
    </location>
</feature>
<feature type="domain" description="Cadherin 3" evidence="3">
    <location>
        <begin position="245"/>
        <end position="352"/>
    </location>
</feature>
<feature type="domain" description="Cadherin 4" evidence="3">
    <location>
        <begin position="355"/>
        <end position="460"/>
    </location>
</feature>
<feature type="domain" description="Cadherin 5" evidence="3">
    <location>
        <begin position="461"/>
        <end position="565"/>
    </location>
</feature>
<feature type="domain" description="Cadherin 6" evidence="3">
    <location>
        <begin position="600"/>
        <end position="711"/>
    </location>
</feature>
<feature type="region of interest" description="Disordered" evidence="4">
    <location>
        <begin position="857"/>
        <end position="930"/>
    </location>
</feature>
<feature type="region of interest" description="Disordered" evidence="4">
    <location>
        <begin position="973"/>
        <end position="1026"/>
    </location>
</feature>
<feature type="region of interest" description="Disordered" evidence="4">
    <location>
        <begin position="1076"/>
        <end position="1104"/>
    </location>
</feature>
<feature type="region of interest" description="Disordered" evidence="4">
    <location>
        <begin position="1156"/>
        <end position="1180"/>
    </location>
</feature>
<feature type="compositionally biased region" description="Polar residues" evidence="4">
    <location>
        <begin position="904"/>
        <end position="918"/>
    </location>
</feature>
<feature type="compositionally biased region" description="Acidic residues" evidence="4">
    <location>
        <begin position="1014"/>
        <end position="1026"/>
    </location>
</feature>
<feature type="compositionally biased region" description="Polar residues" evidence="4">
    <location>
        <begin position="1076"/>
        <end position="1093"/>
    </location>
</feature>
<feature type="modified residue" description="Phosphoserine" evidence="13">
    <location>
        <position position="859"/>
    </location>
</feature>
<feature type="modified residue" description="Phosphoserine" evidence="1">
    <location>
        <position position="1064"/>
    </location>
</feature>
<feature type="glycosylation site" description="N-linked (GlcNAc...) asparagine" evidence="2">
    <location>
        <position position="265"/>
    </location>
</feature>
<feature type="glycosylation site" description="N-linked (GlcNAc...) asparagine" evidence="2">
    <location>
        <position position="415"/>
    </location>
</feature>
<feature type="glycosylation site" description="N-linked (GlcNAc...) asparagine" evidence="2">
    <location>
        <position position="582"/>
    </location>
</feature>
<feature type="glycosylation site" description="N-linked (GlcNAc...) asparagine" evidence="2">
    <location>
        <position position="659"/>
    </location>
</feature>
<feature type="glycosylation site" description="N-linked (GlcNAc...) asparagine" evidence="2">
    <location>
        <position position="662"/>
    </location>
</feature>
<feature type="sequence conflict" description="In Ref. 1; CAA69965." evidence="11" ref="1">
    <original>Q</original>
    <variation>E</variation>
    <location>
        <position position="813"/>
    </location>
</feature>
<name>PCD12_MOUSE</name>
<gene>
    <name evidence="12" type="primary">Pcdh12</name>
</gene>
<sequence length="1180" mass="128673">MMLLLPFLLGLLGPGSYLFISGDCQEVATVMVKFQVTEEVPSGTVIGKLSQELRVEERRGKAGDAFQILQLPQALPVQMNSEDGLLSTSSRLDREKLCRQEDPCLVSFDVLATGASALIHVEIQVLDINDHQPQFPKDEQELEISESASLHTRIPLDRALDQDTGPNSLYSYSLSPSEHFALDVIVGPDETKHAELVVVKELDRELHSYFDLVLTAYDNGNPPKSGISVVKVNVLDSNDNSPVFAESSLALEIPEDTVPGTLLINLTATDPDQGPNGEVEFFFGKHVSPEVMNTFGIDAKTGQIILRQALDYEKNPAYEVDVQARDLGPNSIPGHCKVLIKVLDVNDNAPSILITWASQTSLVSEDLPRDSFIALVSANDLDSGNNGLVHCWLNQELGHFRLKRTNGNTYMLLTNATLDREQWPIYTLTVFAQDQGPQPLSAEKELQIQVSDVNDNAPVFEKSRYEVSTWENNPPSLHLITLKAHDADLGSNGKVSYRIKDSPVSHLVIIDFETGEVTAQRSLDYEQMAGFEFQVIAEDRGQPQLASSISVWVSLLDANDNAPEVIQPVLSEGKATLSVLVNASTGHLLLPIENPSGMDPAGTGIPPKATHSPWSFLLLTIVARDADSGANGELFYSIQSGNDAHLFFLSPSLGQLFINVTNASSLIGSQWDLGIVVEDQGSPSLQTQVSLKVVFVTSVDHLRDSAHEPGVLSTPALALICLAVLLAIFGLLLALFVSICRTERKDNRAYNCREAESSYRHQPKRPQKHIQKADIHLVPVLRAHENETDEVRPSHKDTSKETLMEAGWDSCLQAPFHLTPTLYRTLRNQGNQGELAESQEVLQDTFNFLFNHPRQRNASRENLNLPESPPAVRQPLLRPLKVPGSPIARATGDQDKEEAPQSPPASSATLRRQRNFNGKVSPRGESGPHQILRSLVRLSVAAFAERNPVEEPAGDSPPVQQISQLLSLLHQGQFQPKPNHRGNKYLAKPGGSSRGTIPDTEGLVGLKPSGQAEPDLEEGPPSPEEDLSVKRLLEEELSSLLDPNTGLALDKLSPPDPAWMARLSLPLTTNYRDNLSSPDATTSEEPRTFQTFGKTVGPGPELSPTGTRLASTFVSEMSSLLEMLLGQHTVPVEAASAALRRLSVCGRTLSLDLATSGASASEAQGRKKAAESRLGCGRNL</sequence>
<evidence type="ECO:0000250" key="1">
    <source>
        <dbReference type="UniProtKB" id="Q9NPG4"/>
    </source>
</evidence>
<evidence type="ECO:0000255" key="2"/>
<evidence type="ECO:0000255" key="3">
    <source>
        <dbReference type="PROSITE-ProRule" id="PRU00043"/>
    </source>
</evidence>
<evidence type="ECO:0000256" key="4">
    <source>
        <dbReference type="SAM" id="MobiDB-lite"/>
    </source>
</evidence>
<evidence type="ECO:0000269" key="5">
    <source>
    </source>
</evidence>
<evidence type="ECO:0000269" key="6">
    <source>
    </source>
</evidence>
<evidence type="ECO:0000269" key="7">
    <source>
    </source>
</evidence>
<evidence type="ECO:0000269" key="8">
    <source>
    </source>
</evidence>
<evidence type="ECO:0000269" key="9">
    <source>
    </source>
</evidence>
<evidence type="ECO:0000303" key="10">
    <source>
    </source>
</evidence>
<evidence type="ECO:0000305" key="11"/>
<evidence type="ECO:0000312" key="12">
    <source>
        <dbReference type="MGI" id="MGI:1855700"/>
    </source>
</evidence>
<evidence type="ECO:0007744" key="13">
    <source>
    </source>
</evidence>
<reference key="1">
    <citation type="journal article" date="1998" name="J. Biol. Chem.">
        <title>Identification of a novel cadherin (vascular endothelial cadherin-2) located at intercellular junctions in endothelial cells.</title>
        <authorList>
            <person name="Telo P."/>
            <person name="Breviario F."/>
            <person name="Huber P."/>
            <person name="Panzeri C."/>
            <person name="Dejana E."/>
        </authorList>
    </citation>
    <scope>NUCLEOTIDE SEQUENCE [MRNA]</scope>
    <scope>FUNCTION</scope>
    <scope>SUBCELLULAR LOCATION</scope>
    <scope>TISSUE SPECIFICITY</scope>
    <source>
        <tissue>Brain capillary</tissue>
    </source>
</reference>
<reference key="2">
    <citation type="journal article" date="2009" name="PLoS Biol.">
        <title>Lineage-specific biology revealed by a finished genome assembly of the mouse.</title>
        <authorList>
            <person name="Church D.M."/>
            <person name="Goodstadt L."/>
            <person name="Hillier L.W."/>
            <person name="Zody M.C."/>
            <person name="Goldstein S."/>
            <person name="She X."/>
            <person name="Bult C.J."/>
            <person name="Agarwala R."/>
            <person name="Cherry J.L."/>
            <person name="DiCuccio M."/>
            <person name="Hlavina W."/>
            <person name="Kapustin Y."/>
            <person name="Meric P."/>
            <person name="Maglott D."/>
            <person name="Birtle Z."/>
            <person name="Marques A.C."/>
            <person name="Graves T."/>
            <person name="Zhou S."/>
            <person name="Teague B."/>
            <person name="Potamousis K."/>
            <person name="Churas C."/>
            <person name="Place M."/>
            <person name="Herschleb J."/>
            <person name="Runnheim R."/>
            <person name="Forrest D."/>
            <person name="Amos-Landgraf J."/>
            <person name="Schwartz D.C."/>
            <person name="Cheng Z."/>
            <person name="Lindblad-Toh K."/>
            <person name="Eichler E.E."/>
            <person name="Ponting C.P."/>
        </authorList>
    </citation>
    <scope>NUCLEOTIDE SEQUENCE [LARGE SCALE GENOMIC DNA]</scope>
    <source>
        <strain>C57BL/6J</strain>
    </source>
</reference>
<reference key="3">
    <citation type="submission" date="2005-07" db="EMBL/GenBank/DDBJ databases">
        <authorList>
            <person name="Mural R.J."/>
            <person name="Adams M.D."/>
            <person name="Myers E.W."/>
            <person name="Smith H.O."/>
            <person name="Venter J.C."/>
        </authorList>
    </citation>
    <scope>NUCLEOTIDE SEQUENCE [LARGE SCALE GENOMIC DNA]</scope>
</reference>
<reference key="4">
    <citation type="journal article" date="2005" name="Exp. Cell Res.">
        <title>Protocadherin 12 (VE-cadherin 2) is expressed in endothelial, trophoblast, and mesangial cells.</title>
        <authorList>
            <person name="Rampon C."/>
            <person name="Prandini M.H."/>
            <person name="Bouillot S."/>
            <person name="Pointu H."/>
            <person name="Tillet E."/>
            <person name="Frank R."/>
            <person name="Vernet M."/>
            <person name="Huber P."/>
        </authorList>
    </citation>
    <scope>DISRUPTION PHENOTYPE</scope>
    <scope>TISSUE SPECIFICITY</scope>
    <scope>GLYCOSYLATION</scope>
</reference>
<reference key="5">
    <citation type="journal article" date="2006" name="Placenta">
        <title>Tracing the glycogen cells with protocadherin 12 during mouse placenta development.</title>
        <authorList>
            <person name="Bouillot S."/>
            <person name="Rampon C."/>
            <person name="Tillet E."/>
            <person name="Huber P."/>
        </authorList>
    </citation>
    <scope>TISSUE SPECIFICITY</scope>
</reference>
<reference key="6">
    <citation type="journal article" date="2008" name="Physiol. Genomics">
        <title>Protocadherin 12 deficiency alters morphogenesis and transcriptional profile of the placenta.</title>
        <authorList>
            <person name="Rampon C."/>
            <person name="Bouillot S."/>
            <person name="Climescu-Haulica A."/>
            <person name="Prandini M.H."/>
            <person name="Cand F."/>
            <person name="Vandenbrouck Y."/>
            <person name="Huber P."/>
        </authorList>
    </citation>
    <scope>DISRUPTION PHENOTYPE</scope>
</reference>
<reference key="7">
    <citation type="journal article" date="2010" name="Cell">
        <title>A tissue-specific atlas of mouse protein phosphorylation and expression.</title>
        <authorList>
            <person name="Huttlin E.L."/>
            <person name="Jedrychowski M.P."/>
            <person name="Elias J.E."/>
            <person name="Goswami T."/>
            <person name="Rad R."/>
            <person name="Beausoleil S.A."/>
            <person name="Villen J."/>
            <person name="Haas W."/>
            <person name="Sowa M.E."/>
            <person name="Gygi S.P."/>
        </authorList>
    </citation>
    <scope>PHOSPHORYLATION [LARGE SCALE ANALYSIS] AT SER-859</scope>
    <scope>IDENTIFICATION BY MASS SPECTROMETRY [LARGE SCALE ANALYSIS]</scope>
    <source>
        <tissue>Brown adipose tissue</tissue>
        <tissue>Heart</tissue>
        <tissue>Kidney</tissue>
        <tissue>Lung</tissue>
        <tissue>Spleen</tissue>
    </source>
</reference>
<reference key="8">
    <citation type="journal article" date="2012" name="Pathol. Biol.">
        <title>Protocadherin-12 deficiency leads to modifications in the structure and function of arteries in mice.</title>
        <authorList>
            <person name="Philibert C."/>
            <person name="Bouillot S."/>
            <person name="Huber P."/>
            <person name="Faury G."/>
        </authorList>
    </citation>
    <scope>DISRUPTION PHENOTYPE</scope>
</reference>
<accession>O55134</accession>
<accession>G5E847</accession>
<keyword id="KW-0106">Calcium</keyword>
<keyword id="KW-0130">Cell adhesion</keyword>
<keyword id="KW-0965">Cell junction</keyword>
<keyword id="KW-1003">Cell membrane</keyword>
<keyword id="KW-0325">Glycoprotein</keyword>
<keyword id="KW-0472">Membrane</keyword>
<keyword id="KW-0597">Phosphoprotein</keyword>
<keyword id="KW-1185">Reference proteome</keyword>
<keyword id="KW-0677">Repeat</keyword>
<keyword id="KW-0964">Secreted</keyword>
<keyword id="KW-0732">Signal</keyword>
<keyword id="KW-0812">Transmembrane</keyword>
<keyword id="KW-1133">Transmembrane helix</keyword>
<dbReference type="EMBL" id="Y08715">
    <property type="protein sequence ID" value="CAA69965.1"/>
    <property type="molecule type" value="mRNA"/>
</dbReference>
<dbReference type="EMBL" id="AC133646">
    <property type="status" value="NOT_ANNOTATED_CDS"/>
    <property type="molecule type" value="Genomic_DNA"/>
</dbReference>
<dbReference type="EMBL" id="AC152450">
    <property type="status" value="NOT_ANNOTATED_CDS"/>
    <property type="molecule type" value="Genomic_DNA"/>
</dbReference>
<dbReference type="EMBL" id="CH466528">
    <property type="protein sequence ID" value="EDL10091.1"/>
    <property type="molecule type" value="Genomic_DNA"/>
</dbReference>
<dbReference type="CCDS" id="CCDS29199.1"/>
<dbReference type="PIR" id="T31066">
    <property type="entry name" value="T31066"/>
</dbReference>
<dbReference type="RefSeq" id="NP_059074.2">
    <property type="nucleotide sequence ID" value="NM_017378.2"/>
</dbReference>
<dbReference type="SMR" id="O55134"/>
<dbReference type="BioGRID" id="207321">
    <property type="interactions" value="1"/>
</dbReference>
<dbReference type="FunCoup" id="O55134">
    <property type="interactions" value="181"/>
</dbReference>
<dbReference type="IntAct" id="O55134">
    <property type="interactions" value="1"/>
</dbReference>
<dbReference type="STRING" id="10090.ENSMUSP00000025311"/>
<dbReference type="GlyCosmos" id="O55134">
    <property type="glycosylation" value="5 sites, No reported glycans"/>
</dbReference>
<dbReference type="GlyGen" id="O55134">
    <property type="glycosylation" value="5 sites"/>
</dbReference>
<dbReference type="iPTMnet" id="O55134"/>
<dbReference type="PhosphoSitePlus" id="O55134"/>
<dbReference type="PaxDb" id="10090-ENSMUSP00000025311"/>
<dbReference type="ProteomicsDB" id="294340"/>
<dbReference type="Antibodypedia" id="27396">
    <property type="antibodies" value="84 antibodies from 26 providers"/>
</dbReference>
<dbReference type="DNASU" id="53601"/>
<dbReference type="Ensembl" id="ENSMUST00000025311.8">
    <property type="protein sequence ID" value="ENSMUSP00000025311.6"/>
    <property type="gene ID" value="ENSMUSG00000024440.14"/>
</dbReference>
<dbReference type="GeneID" id="53601"/>
<dbReference type="KEGG" id="mmu:53601"/>
<dbReference type="UCSC" id="uc008esb.1">
    <property type="organism name" value="mouse"/>
</dbReference>
<dbReference type="AGR" id="MGI:1855700"/>
<dbReference type="CTD" id="51294"/>
<dbReference type="MGI" id="MGI:1855700">
    <property type="gene designation" value="Pcdh12"/>
</dbReference>
<dbReference type="VEuPathDB" id="HostDB:ENSMUSG00000024440"/>
<dbReference type="eggNOG" id="KOG3594">
    <property type="taxonomic scope" value="Eukaryota"/>
</dbReference>
<dbReference type="GeneTree" id="ENSGT00940000160403"/>
<dbReference type="HOGENOM" id="CLU_006480_1_2_1"/>
<dbReference type="InParanoid" id="O55134"/>
<dbReference type="OMA" id="ALFMSIC"/>
<dbReference type="OrthoDB" id="6252479at2759"/>
<dbReference type="PhylomeDB" id="O55134"/>
<dbReference type="TreeFam" id="TF352008"/>
<dbReference type="BioGRID-ORCS" id="53601">
    <property type="hits" value="0 hits in 77 CRISPR screens"/>
</dbReference>
<dbReference type="ChiTaRS" id="Pcdh12">
    <property type="organism name" value="mouse"/>
</dbReference>
<dbReference type="PRO" id="PR:O55134"/>
<dbReference type="Proteomes" id="UP000000589">
    <property type="component" value="Chromosome 18"/>
</dbReference>
<dbReference type="RNAct" id="O55134">
    <property type="molecule type" value="protein"/>
</dbReference>
<dbReference type="Bgee" id="ENSMUSG00000024440">
    <property type="expression patterns" value="Expressed in left lung lobe and 134 other cell types or tissues"/>
</dbReference>
<dbReference type="ExpressionAtlas" id="O55134">
    <property type="expression patterns" value="baseline and differential"/>
</dbReference>
<dbReference type="GO" id="GO:0005911">
    <property type="term" value="C:cell-cell junction"/>
    <property type="evidence" value="ECO:0000314"/>
    <property type="project" value="MGI"/>
</dbReference>
<dbReference type="GO" id="GO:0005576">
    <property type="term" value="C:extracellular region"/>
    <property type="evidence" value="ECO:0007669"/>
    <property type="project" value="UniProtKB-SubCell"/>
</dbReference>
<dbReference type="GO" id="GO:0005886">
    <property type="term" value="C:plasma membrane"/>
    <property type="evidence" value="ECO:0000250"/>
    <property type="project" value="MGI"/>
</dbReference>
<dbReference type="GO" id="GO:0005509">
    <property type="term" value="F:calcium ion binding"/>
    <property type="evidence" value="ECO:0007669"/>
    <property type="project" value="InterPro"/>
</dbReference>
<dbReference type="GO" id="GO:0016339">
    <property type="term" value="P:calcium-dependent cell-cell adhesion via plasma membrane cell adhesion molecules"/>
    <property type="evidence" value="ECO:0000314"/>
    <property type="project" value="MGI"/>
</dbReference>
<dbReference type="GO" id="GO:0005977">
    <property type="term" value="P:glycogen metabolic process"/>
    <property type="evidence" value="ECO:0000315"/>
    <property type="project" value="MGI"/>
</dbReference>
<dbReference type="GO" id="GO:0007156">
    <property type="term" value="P:homophilic cell adhesion via plasma membrane adhesion molecules"/>
    <property type="evidence" value="ECO:0000314"/>
    <property type="project" value="MGI"/>
</dbReference>
<dbReference type="GO" id="GO:0060711">
    <property type="term" value="P:labyrinthine layer development"/>
    <property type="evidence" value="ECO:0000315"/>
    <property type="project" value="MGI"/>
</dbReference>
<dbReference type="CDD" id="cd11304">
    <property type="entry name" value="Cadherin_repeat"/>
    <property type="match status" value="6"/>
</dbReference>
<dbReference type="FunFam" id="2.60.40.60:FF:000190">
    <property type="entry name" value="Protocadherin 12"/>
    <property type="match status" value="1"/>
</dbReference>
<dbReference type="FunFam" id="2.60.40.60:FF:000193">
    <property type="entry name" value="Protocadherin 12"/>
    <property type="match status" value="1"/>
</dbReference>
<dbReference type="FunFam" id="2.60.40.60:FF:000247">
    <property type="entry name" value="Protocadherin 12"/>
    <property type="match status" value="1"/>
</dbReference>
<dbReference type="FunFam" id="2.60.40.60:FF:000002">
    <property type="entry name" value="Protocadherin alpha 2"/>
    <property type="match status" value="1"/>
</dbReference>
<dbReference type="FunFam" id="2.60.40.60:FF:000003">
    <property type="entry name" value="Protocadherin alpha 2"/>
    <property type="match status" value="1"/>
</dbReference>
<dbReference type="FunFam" id="2.60.40.60:FF:000007">
    <property type="entry name" value="Protocadherin alpha 2"/>
    <property type="match status" value="1"/>
</dbReference>
<dbReference type="Gene3D" id="2.60.40.60">
    <property type="entry name" value="Cadherins"/>
    <property type="match status" value="6"/>
</dbReference>
<dbReference type="InterPro" id="IPR002126">
    <property type="entry name" value="Cadherin-like_dom"/>
</dbReference>
<dbReference type="InterPro" id="IPR015919">
    <property type="entry name" value="Cadherin-like_sf"/>
</dbReference>
<dbReference type="InterPro" id="IPR020894">
    <property type="entry name" value="Cadherin_CS"/>
</dbReference>
<dbReference type="InterPro" id="IPR013164">
    <property type="entry name" value="Cadherin_N"/>
</dbReference>
<dbReference type="InterPro" id="IPR050174">
    <property type="entry name" value="Protocadherin/Cadherin-CA"/>
</dbReference>
<dbReference type="PANTHER" id="PTHR24028">
    <property type="entry name" value="CADHERIN-87A"/>
    <property type="match status" value="1"/>
</dbReference>
<dbReference type="PANTHER" id="PTHR24028:SF42">
    <property type="entry name" value="PROTOCADHERIN-12"/>
    <property type="match status" value="1"/>
</dbReference>
<dbReference type="Pfam" id="PF00028">
    <property type="entry name" value="Cadherin"/>
    <property type="match status" value="4"/>
</dbReference>
<dbReference type="Pfam" id="PF08266">
    <property type="entry name" value="Cadherin_2"/>
    <property type="match status" value="1"/>
</dbReference>
<dbReference type="PRINTS" id="PR00205">
    <property type="entry name" value="CADHERIN"/>
</dbReference>
<dbReference type="SMART" id="SM00112">
    <property type="entry name" value="CA"/>
    <property type="match status" value="6"/>
</dbReference>
<dbReference type="SUPFAM" id="SSF49313">
    <property type="entry name" value="Cadherin-like"/>
    <property type="match status" value="5"/>
</dbReference>
<dbReference type="PROSITE" id="PS00232">
    <property type="entry name" value="CADHERIN_1"/>
    <property type="match status" value="5"/>
</dbReference>
<dbReference type="PROSITE" id="PS50268">
    <property type="entry name" value="CADHERIN_2"/>
    <property type="match status" value="6"/>
</dbReference>
<protein>
    <recommendedName>
        <fullName evidence="11">Protocadherin-12</fullName>
    </recommendedName>
    <alternativeName>
        <fullName evidence="10">Vascular cadherin-2</fullName>
    </alternativeName>
    <alternativeName>
        <fullName evidence="10">Vascular endothelial cadherin-2</fullName>
        <shortName evidence="10">VE-cad-2</shortName>
        <shortName evidence="10">VE-cadherin-2</shortName>
    </alternativeName>
    <component>
        <recommendedName>
            <fullName evidence="1">Protocadherin-12, secreted form</fullName>
        </recommendedName>
    </component>
</protein>